<feature type="chain" id="PRO_1000191318" description="Transcriptional regulator MraZ">
    <location>
        <begin position="1"/>
        <end position="152"/>
    </location>
</feature>
<feature type="domain" description="SpoVT-AbrB 1" evidence="2">
    <location>
        <begin position="7"/>
        <end position="51"/>
    </location>
</feature>
<feature type="domain" description="SpoVT-AbrB 2" evidence="2">
    <location>
        <begin position="89"/>
        <end position="132"/>
    </location>
</feature>
<organism>
    <name type="scientific">Pelodictyon phaeoclathratiforme (strain DSM 5477 / BU-1)</name>
    <dbReference type="NCBI Taxonomy" id="324925"/>
    <lineage>
        <taxon>Bacteria</taxon>
        <taxon>Pseudomonadati</taxon>
        <taxon>Chlorobiota</taxon>
        <taxon>Chlorobiia</taxon>
        <taxon>Chlorobiales</taxon>
        <taxon>Chlorobiaceae</taxon>
        <taxon>Chlorobium/Pelodictyon group</taxon>
        <taxon>Pelodictyon</taxon>
    </lineage>
</organism>
<dbReference type="EMBL" id="CP001110">
    <property type="protein sequence ID" value="ACF45045.1"/>
    <property type="molecule type" value="Genomic_DNA"/>
</dbReference>
<dbReference type="RefSeq" id="WP_012509513.1">
    <property type="nucleotide sequence ID" value="NC_011060.1"/>
</dbReference>
<dbReference type="SMR" id="B4SHF2"/>
<dbReference type="STRING" id="324925.Ppha_2902"/>
<dbReference type="KEGG" id="pph:Ppha_2902"/>
<dbReference type="eggNOG" id="COG2001">
    <property type="taxonomic scope" value="Bacteria"/>
</dbReference>
<dbReference type="HOGENOM" id="CLU_107907_0_5_10"/>
<dbReference type="OrthoDB" id="9807753at2"/>
<dbReference type="Proteomes" id="UP000002724">
    <property type="component" value="Chromosome"/>
</dbReference>
<dbReference type="GO" id="GO:0005737">
    <property type="term" value="C:cytoplasm"/>
    <property type="evidence" value="ECO:0007669"/>
    <property type="project" value="UniProtKB-UniRule"/>
</dbReference>
<dbReference type="GO" id="GO:0009295">
    <property type="term" value="C:nucleoid"/>
    <property type="evidence" value="ECO:0007669"/>
    <property type="project" value="UniProtKB-SubCell"/>
</dbReference>
<dbReference type="GO" id="GO:0003700">
    <property type="term" value="F:DNA-binding transcription factor activity"/>
    <property type="evidence" value="ECO:0007669"/>
    <property type="project" value="UniProtKB-UniRule"/>
</dbReference>
<dbReference type="GO" id="GO:0000976">
    <property type="term" value="F:transcription cis-regulatory region binding"/>
    <property type="evidence" value="ECO:0007669"/>
    <property type="project" value="TreeGrafter"/>
</dbReference>
<dbReference type="GO" id="GO:2000143">
    <property type="term" value="P:negative regulation of DNA-templated transcription initiation"/>
    <property type="evidence" value="ECO:0007669"/>
    <property type="project" value="TreeGrafter"/>
</dbReference>
<dbReference type="CDD" id="cd16321">
    <property type="entry name" value="MraZ_C"/>
    <property type="match status" value="1"/>
</dbReference>
<dbReference type="CDD" id="cd16320">
    <property type="entry name" value="MraZ_N"/>
    <property type="match status" value="1"/>
</dbReference>
<dbReference type="Gene3D" id="3.40.1550.20">
    <property type="entry name" value="Transcriptional regulator MraZ domain"/>
    <property type="match status" value="1"/>
</dbReference>
<dbReference type="HAMAP" id="MF_01008">
    <property type="entry name" value="MraZ"/>
    <property type="match status" value="1"/>
</dbReference>
<dbReference type="InterPro" id="IPR003444">
    <property type="entry name" value="MraZ"/>
</dbReference>
<dbReference type="InterPro" id="IPR035644">
    <property type="entry name" value="MraZ_C"/>
</dbReference>
<dbReference type="InterPro" id="IPR020603">
    <property type="entry name" value="MraZ_dom"/>
</dbReference>
<dbReference type="InterPro" id="IPR035642">
    <property type="entry name" value="MraZ_N"/>
</dbReference>
<dbReference type="InterPro" id="IPR038619">
    <property type="entry name" value="MraZ_sf"/>
</dbReference>
<dbReference type="InterPro" id="IPR007159">
    <property type="entry name" value="SpoVT-AbrB_dom"/>
</dbReference>
<dbReference type="InterPro" id="IPR037914">
    <property type="entry name" value="SpoVT-AbrB_sf"/>
</dbReference>
<dbReference type="NCBIfam" id="NF001476">
    <property type="entry name" value="PRK00326.2-2"/>
    <property type="match status" value="1"/>
</dbReference>
<dbReference type="PANTHER" id="PTHR34701">
    <property type="entry name" value="TRANSCRIPTIONAL REGULATOR MRAZ"/>
    <property type="match status" value="1"/>
</dbReference>
<dbReference type="PANTHER" id="PTHR34701:SF1">
    <property type="entry name" value="TRANSCRIPTIONAL REGULATOR MRAZ"/>
    <property type="match status" value="1"/>
</dbReference>
<dbReference type="Pfam" id="PF02381">
    <property type="entry name" value="MraZ"/>
    <property type="match status" value="2"/>
</dbReference>
<dbReference type="SUPFAM" id="SSF89447">
    <property type="entry name" value="AbrB/MazE/MraZ-like"/>
    <property type="match status" value="1"/>
</dbReference>
<dbReference type="PROSITE" id="PS51740">
    <property type="entry name" value="SPOVT_ABRB"/>
    <property type="match status" value="2"/>
</dbReference>
<protein>
    <recommendedName>
        <fullName>Transcriptional regulator MraZ</fullName>
    </recommendedName>
</protein>
<gene>
    <name evidence="1" type="primary">mraZ</name>
    <name type="ordered locus">Ppha_2902</name>
</gene>
<comment type="subunit">
    <text evidence="1">Forms oligomers.</text>
</comment>
<comment type="subcellular location">
    <subcellularLocation>
        <location evidence="1">Cytoplasm</location>
        <location evidence="1">Nucleoid</location>
    </subcellularLocation>
</comment>
<comment type="similarity">
    <text evidence="1">Belongs to the MraZ family.</text>
</comment>
<keyword id="KW-0963">Cytoplasm</keyword>
<keyword id="KW-0238">DNA-binding</keyword>
<keyword id="KW-1185">Reference proteome</keyword>
<keyword id="KW-0677">Repeat</keyword>
<keyword id="KW-0804">Transcription</keyword>
<keyword id="KW-0805">Transcription regulation</keyword>
<accession>B4SHF2</accession>
<reference key="1">
    <citation type="submission" date="2008-06" db="EMBL/GenBank/DDBJ databases">
        <title>Complete sequence of Pelodictyon phaeoclathratiforme BU-1.</title>
        <authorList>
            <consortium name="US DOE Joint Genome Institute"/>
            <person name="Lucas S."/>
            <person name="Copeland A."/>
            <person name="Lapidus A."/>
            <person name="Glavina del Rio T."/>
            <person name="Dalin E."/>
            <person name="Tice H."/>
            <person name="Bruce D."/>
            <person name="Goodwin L."/>
            <person name="Pitluck S."/>
            <person name="Schmutz J."/>
            <person name="Larimer F."/>
            <person name="Land M."/>
            <person name="Hauser L."/>
            <person name="Kyrpides N."/>
            <person name="Mikhailova N."/>
            <person name="Liu Z."/>
            <person name="Li T."/>
            <person name="Zhao F."/>
            <person name="Overmann J."/>
            <person name="Bryant D.A."/>
            <person name="Richardson P."/>
        </authorList>
    </citation>
    <scope>NUCLEOTIDE SEQUENCE [LARGE SCALE GENOMIC DNA]</scope>
    <source>
        <strain>DSM 5477 / BU-1</strain>
    </source>
</reference>
<proteinExistence type="inferred from homology"/>
<name>MRAZ_PELPB</name>
<evidence type="ECO:0000255" key="1">
    <source>
        <dbReference type="HAMAP-Rule" id="MF_01008"/>
    </source>
</evidence>
<evidence type="ECO:0000255" key="2">
    <source>
        <dbReference type="PROSITE-ProRule" id="PRU01076"/>
    </source>
</evidence>
<sequence length="152" mass="17270">MAGFIGKERHAIDEKGRLMIPARFRRKFESVTVEGVADAFSGLYIMKAPDRSLELYEPLIWAGMRKSLSGLSDFNPEERLLKTLMYESLEMVELDRQGRVALSREFLDHAGITKDVVIIGADTKMIIWDPQRLAALLQESADRFASLAGRYF</sequence>